<proteinExistence type="evidence at protein level"/>
<keyword id="KW-0002">3D-structure</keyword>
<keyword id="KW-0235">DNA replication</keyword>
<keyword id="KW-0238">DNA-binding</keyword>
<keyword id="KW-0240">DNA-directed RNA polymerase</keyword>
<keyword id="KW-0460">Magnesium</keyword>
<keyword id="KW-0479">Metal-binding</keyword>
<keyword id="KW-0548">Nucleotidyltransferase</keyword>
<keyword id="KW-0639">Primosome</keyword>
<keyword id="KW-0804">Transcription</keyword>
<keyword id="KW-0808">Transferase</keyword>
<keyword id="KW-0862">Zinc</keyword>
<keyword id="KW-0863">Zinc-finger</keyword>
<name>DNAG_STAAM</name>
<organism>
    <name type="scientific">Staphylococcus aureus (strain Mu50 / ATCC 700699)</name>
    <dbReference type="NCBI Taxonomy" id="158878"/>
    <lineage>
        <taxon>Bacteria</taxon>
        <taxon>Bacillati</taxon>
        <taxon>Bacillota</taxon>
        <taxon>Bacilli</taxon>
        <taxon>Bacillales</taxon>
        <taxon>Staphylococcaceae</taxon>
        <taxon>Staphylococcus</taxon>
    </lineage>
</organism>
<evidence type="ECO:0000255" key="1">
    <source>
        <dbReference type="HAMAP-Rule" id="MF_00974"/>
    </source>
</evidence>
<evidence type="ECO:0007829" key="2">
    <source>
        <dbReference type="PDB" id="2LZN"/>
    </source>
</evidence>
<comment type="function">
    <text evidence="1">RNA polymerase that catalyzes the synthesis of short RNA molecules used as primers for DNA polymerase during DNA replication.</text>
</comment>
<comment type="catalytic activity">
    <reaction evidence="1">
        <text>ssDNA + n NTP = ssDNA/pppN(pN)n-1 hybrid + (n-1) diphosphate.</text>
        <dbReference type="EC" id="2.7.7.101"/>
    </reaction>
</comment>
<comment type="cofactor">
    <cofactor evidence="1">
        <name>Zn(2+)</name>
        <dbReference type="ChEBI" id="CHEBI:29105"/>
    </cofactor>
    <text evidence="1">Binds 1 zinc ion per monomer.</text>
</comment>
<comment type="cofactor">
    <cofactor evidence="1">
        <name>Mg(2+)</name>
        <dbReference type="ChEBI" id="CHEBI:18420"/>
    </cofactor>
    <text evidence="1">Binds two Mg(2+) per subunit.</text>
</comment>
<comment type="subunit">
    <text evidence="1">Monomer. Interacts with DnaB.</text>
</comment>
<comment type="domain">
    <text evidence="1">Contains an N-terminal zinc-binding domain, a central core domain that contains the primase activity, and a C-terminal DnaB-binding domain.</text>
</comment>
<comment type="similarity">
    <text evidence="1">Belongs to the DnaG primase family.</text>
</comment>
<accession>P63964</accession>
<accession>Q99TT4</accession>
<sequence>MRIDQSIINEIKDKTDILDLVSEYVKLEKRGRNYIGLCPFHDEKTPSFTVSEDKQICHCFGCKKGGNVFQFTQEIKDISFVEAVKELGDRVNVAVDIEATQSNSNVQIASDDLQMIEMHELIQEFYYYALTKTVEGEQALTYLQERGFTDALIKERGIGFAPDSSHFCHDFLQKKGYDIELAYEAGLLSRNEENFSYYDRFRNRIMFPLKNAQGRIVGYSGRTYTGQEPKYLNSPETPIFQKRKLLYNLDKARKSIRKLDEIVLLEGFMDVIKSDTAGLKNVVATMGTQLSDEHITFIRKLTSNITLMFDGDFAGSEATLKTGQHLLQQGLNVFVIQLPSGMDPDEYIGKYGNDAFTTFVKNDKKSFAHYKVSILKDEIAHNDLSYERYLKELSHDISLMKSSILQQKAINDVAPFFNVSPEQLANEIQFNQAPANYYPEDEYGGYDEYGGYIEPEPIGMAQFDNLSRQEKAERAFLKHLMRDKDTFLNYYESVDKDNFTNQHFKYVFEVLHDFYAENDQYNISDAVQYVNSNELRETLISLEQYNLNDEPYENEIDDYVNVINEKGQETIESLNHKLREATRIGDVELQKYYLQQIVAKNKERM</sequence>
<gene>
    <name evidence="1" type="primary">dnaG</name>
    <name type="ordered locus">SAV1562</name>
</gene>
<dbReference type="EC" id="2.7.7.101" evidence="1"/>
<dbReference type="EMBL" id="BA000017">
    <property type="protein sequence ID" value="BAB57724.1"/>
    <property type="molecule type" value="Genomic_DNA"/>
</dbReference>
<dbReference type="RefSeq" id="WP_001217257.1">
    <property type="nucleotide sequence ID" value="NC_002758.2"/>
</dbReference>
<dbReference type="PDB" id="2LZN">
    <property type="method" value="NMR"/>
    <property type="chains" value="A=463-605"/>
</dbReference>
<dbReference type="PDBsum" id="2LZN"/>
<dbReference type="BMRB" id="P63964"/>
<dbReference type="SMR" id="P63964"/>
<dbReference type="KEGG" id="sav:SAV1562"/>
<dbReference type="HOGENOM" id="CLU_013501_3_3_9"/>
<dbReference type="PhylomeDB" id="P63964"/>
<dbReference type="EvolutionaryTrace" id="P63964"/>
<dbReference type="Proteomes" id="UP000002481">
    <property type="component" value="Chromosome"/>
</dbReference>
<dbReference type="GO" id="GO:0005737">
    <property type="term" value="C:cytoplasm"/>
    <property type="evidence" value="ECO:0007669"/>
    <property type="project" value="TreeGrafter"/>
</dbReference>
<dbReference type="GO" id="GO:0000428">
    <property type="term" value="C:DNA-directed RNA polymerase complex"/>
    <property type="evidence" value="ECO:0007669"/>
    <property type="project" value="UniProtKB-KW"/>
</dbReference>
<dbReference type="GO" id="GO:1990077">
    <property type="term" value="C:primosome complex"/>
    <property type="evidence" value="ECO:0007669"/>
    <property type="project" value="UniProtKB-KW"/>
</dbReference>
<dbReference type="GO" id="GO:0005524">
    <property type="term" value="F:ATP binding"/>
    <property type="evidence" value="ECO:0007669"/>
    <property type="project" value="InterPro"/>
</dbReference>
<dbReference type="GO" id="GO:0003677">
    <property type="term" value="F:DNA binding"/>
    <property type="evidence" value="ECO:0007669"/>
    <property type="project" value="UniProtKB-KW"/>
</dbReference>
<dbReference type="GO" id="GO:0003678">
    <property type="term" value="F:DNA helicase activity"/>
    <property type="evidence" value="ECO:0007669"/>
    <property type="project" value="InterPro"/>
</dbReference>
<dbReference type="GO" id="GO:0003899">
    <property type="term" value="F:DNA-directed RNA polymerase activity"/>
    <property type="evidence" value="ECO:0007669"/>
    <property type="project" value="InterPro"/>
</dbReference>
<dbReference type="GO" id="GO:0008270">
    <property type="term" value="F:zinc ion binding"/>
    <property type="evidence" value="ECO:0007669"/>
    <property type="project" value="UniProtKB-UniRule"/>
</dbReference>
<dbReference type="GO" id="GO:0006269">
    <property type="term" value="P:DNA replication, synthesis of primer"/>
    <property type="evidence" value="ECO:0007669"/>
    <property type="project" value="UniProtKB-UniRule"/>
</dbReference>
<dbReference type="CDD" id="cd03364">
    <property type="entry name" value="TOPRIM_DnaG_primases"/>
    <property type="match status" value="1"/>
</dbReference>
<dbReference type="FunFam" id="3.90.580.10:FF:000001">
    <property type="entry name" value="DNA primase"/>
    <property type="match status" value="1"/>
</dbReference>
<dbReference type="FunFam" id="3.90.980.10:FF:000001">
    <property type="entry name" value="DNA primase"/>
    <property type="match status" value="1"/>
</dbReference>
<dbReference type="Gene3D" id="3.40.1360.10">
    <property type="match status" value="1"/>
</dbReference>
<dbReference type="Gene3D" id="3.90.980.10">
    <property type="entry name" value="DNA primase, catalytic core, N-terminal domain"/>
    <property type="match status" value="1"/>
</dbReference>
<dbReference type="Gene3D" id="1.10.860.10">
    <property type="entry name" value="DNAb Helicase, Chain A"/>
    <property type="match status" value="1"/>
</dbReference>
<dbReference type="Gene3D" id="1.20.50.20">
    <property type="entry name" value="DnaG, RNA polymerase domain, helical bundle"/>
    <property type="match status" value="1"/>
</dbReference>
<dbReference type="Gene3D" id="3.90.580.10">
    <property type="entry name" value="Zinc finger, CHC2-type domain"/>
    <property type="match status" value="1"/>
</dbReference>
<dbReference type="HAMAP" id="MF_00974">
    <property type="entry name" value="DNA_primase_DnaG"/>
    <property type="match status" value="1"/>
</dbReference>
<dbReference type="InterPro" id="IPR036185">
    <property type="entry name" value="DNA_heli_DnaB-like_N_sf"/>
</dbReference>
<dbReference type="InterPro" id="IPR016136">
    <property type="entry name" value="DNA_helicase_N/primase_C"/>
</dbReference>
<dbReference type="InterPro" id="IPR037068">
    <property type="entry name" value="DNA_primase_core_N_sf"/>
</dbReference>
<dbReference type="InterPro" id="IPR006295">
    <property type="entry name" value="DNA_primase_DnaG"/>
</dbReference>
<dbReference type="InterPro" id="IPR036977">
    <property type="entry name" value="DNA_primase_Znf_CHC2"/>
</dbReference>
<dbReference type="InterPro" id="IPR030846">
    <property type="entry name" value="DnaG_bac"/>
</dbReference>
<dbReference type="InterPro" id="IPR048453">
    <property type="entry name" value="DnaG_cat_HB"/>
</dbReference>
<dbReference type="InterPro" id="IPR013264">
    <property type="entry name" value="DNAG_N"/>
</dbReference>
<dbReference type="InterPro" id="IPR050219">
    <property type="entry name" value="DnaG_primase"/>
</dbReference>
<dbReference type="InterPro" id="IPR034151">
    <property type="entry name" value="TOPRIM_DnaG_bac"/>
</dbReference>
<dbReference type="InterPro" id="IPR006171">
    <property type="entry name" value="TOPRIM_dom"/>
</dbReference>
<dbReference type="InterPro" id="IPR002694">
    <property type="entry name" value="Znf_CHC2"/>
</dbReference>
<dbReference type="NCBIfam" id="TIGR01391">
    <property type="entry name" value="dnaG"/>
    <property type="match status" value="1"/>
</dbReference>
<dbReference type="PANTHER" id="PTHR30313">
    <property type="entry name" value="DNA PRIMASE"/>
    <property type="match status" value="1"/>
</dbReference>
<dbReference type="PANTHER" id="PTHR30313:SF2">
    <property type="entry name" value="DNA PRIMASE"/>
    <property type="match status" value="1"/>
</dbReference>
<dbReference type="Pfam" id="PF21650">
    <property type="entry name" value="DnaG_cat_HB"/>
    <property type="match status" value="1"/>
</dbReference>
<dbReference type="Pfam" id="PF08275">
    <property type="entry name" value="DNAG_N"/>
    <property type="match status" value="1"/>
</dbReference>
<dbReference type="Pfam" id="PF13155">
    <property type="entry name" value="Toprim_2"/>
    <property type="match status" value="1"/>
</dbReference>
<dbReference type="Pfam" id="PF01807">
    <property type="entry name" value="Zn_ribbon_DnaG"/>
    <property type="match status" value="1"/>
</dbReference>
<dbReference type="PIRSF" id="PIRSF002811">
    <property type="entry name" value="DnaG"/>
    <property type="match status" value="1"/>
</dbReference>
<dbReference type="SMART" id="SM00493">
    <property type="entry name" value="TOPRIM"/>
    <property type="match status" value="1"/>
</dbReference>
<dbReference type="SMART" id="SM00400">
    <property type="entry name" value="ZnF_CHCC"/>
    <property type="match status" value="1"/>
</dbReference>
<dbReference type="SUPFAM" id="SSF56731">
    <property type="entry name" value="DNA primase core"/>
    <property type="match status" value="1"/>
</dbReference>
<dbReference type="SUPFAM" id="SSF48024">
    <property type="entry name" value="N-terminal domain of DnaB helicase"/>
    <property type="match status" value="1"/>
</dbReference>
<dbReference type="SUPFAM" id="SSF57783">
    <property type="entry name" value="Zinc beta-ribbon"/>
    <property type="match status" value="1"/>
</dbReference>
<dbReference type="PROSITE" id="PS50880">
    <property type="entry name" value="TOPRIM"/>
    <property type="match status" value="1"/>
</dbReference>
<feature type="chain" id="PRO_0000180519" description="DNA primase">
    <location>
        <begin position="1"/>
        <end position="605"/>
    </location>
</feature>
<feature type="domain" description="Toprim" evidence="1">
    <location>
        <begin position="260"/>
        <end position="341"/>
    </location>
</feature>
<feature type="zinc finger region" description="CHC2-type" evidence="1">
    <location>
        <begin position="38"/>
        <end position="62"/>
    </location>
</feature>
<feature type="binding site" evidence="1">
    <location>
        <position position="266"/>
    </location>
    <ligand>
        <name>Mg(2+)</name>
        <dbReference type="ChEBI" id="CHEBI:18420"/>
        <label>1</label>
        <note>catalytic</note>
    </ligand>
</feature>
<feature type="binding site" evidence="1">
    <location>
        <position position="310"/>
    </location>
    <ligand>
        <name>Mg(2+)</name>
        <dbReference type="ChEBI" id="CHEBI:18420"/>
        <label>1</label>
        <note>catalytic</note>
    </ligand>
</feature>
<feature type="binding site" evidence="1">
    <location>
        <position position="310"/>
    </location>
    <ligand>
        <name>Mg(2+)</name>
        <dbReference type="ChEBI" id="CHEBI:18420"/>
        <label>2</label>
    </ligand>
</feature>
<feature type="binding site" evidence="1">
    <location>
        <position position="312"/>
    </location>
    <ligand>
        <name>Mg(2+)</name>
        <dbReference type="ChEBI" id="CHEBI:18420"/>
        <label>2</label>
    </ligand>
</feature>
<feature type="helix" evidence="2">
    <location>
        <begin position="468"/>
        <end position="476"/>
    </location>
</feature>
<feature type="helix" evidence="2">
    <location>
        <begin position="484"/>
        <end position="493"/>
    </location>
</feature>
<feature type="turn" evidence="2">
    <location>
        <begin position="496"/>
        <end position="498"/>
    </location>
</feature>
<feature type="helix" evidence="2">
    <location>
        <begin position="502"/>
        <end position="515"/>
    </location>
</feature>
<feature type="helix" evidence="2">
    <location>
        <begin position="523"/>
        <end position="528"/>
    </location>
</feature>
<feature type="strand" evidence="2">
    <location>
        <begin position="530"/>
        <end position="532"/>
    </location>
</feature>
<feature type="helix" evidence="2">
    <location>
        <begin position="535"/>
        <end position="544"/>
    </location>
</feature>
<feature type="strand" evidence="2">
    <location>
        <begin position="547"/>
        <end position="550"/>
    </location>
</feature>
<feature type="helix" evidence="2">
    <location>
        <begin position="552"/>
        <end position="554"/>
    </location>
</feature>
<feature type="helix" evidence="2">
    <location>
        <begin position="556"/>
        <end position="564"/>
    </location>
</feature>
<feature type="strand" evidence="2">
    <location>
        <begin position="565"/>
        <end position="568"/>
    </location>
</feature>
<feature type="helix" evidence="2">
    <location>
        <begin position="573"/>
        <end position="582"/>
    </location>
</feature>
<feature type="turn" evidence="2">
    <location>
        <begin position="583"/>
        <end position="585"/>
    </location>
</feature>
<feature type="helix" evidence="2">
    <location>
        <begin position="590"/>
        <end position="602"/>
    </location>
</feature>
<protein>
    <recommendedName>
        <fullName evidence="1">DNA primase</fullName>
        <ecNumber evidence="1">2.7.7.101</ecNumber>
    </recommendedName>
</protein>
<reference key="1">
    <citation type="journal article" date="2001" name="Lancet">
        <title>Whole genome sequencing of meticillin-resistant Staphylococcus aureus.</title>
        <authorList>
            <person name="Kuroda M."/>
            <person name="Ohta T."/>
            <person name="Uchiyama I."/>
            <person name="Baba T."/>
            <person name="Yuzawa H."/>
            <person name="Kobayashi I."/>
            <person name="Cui L."/>
            <person name="Oguchi A."/>
            <person name="Aoki K."/>
            <person name="Nagai Y."/>
            <person name="Lian J.-Q."/>
            <person name="Ito T."/>
            <person name="Kanamori M."/>
            <person name="Matsumaru H."/>
            <person name="Maruyama A."/>
            <person name="Murakami H."/>
            <person name="Hosoyama A."/>
            <person name="Mizutani-Ui Y."/>
            <person name="Takahashi N.K."/>
            <person name="Sawano T."/>
            <person name="Inoue R."/>
            <person name="Kaito C."/>
            <person name="Sekimizu K."/>
            <person name="Hirakawa H."/>
            <person name="Kuhara S."/>
            <person name="Goto S."/>
            <person name="Yabuzaki J."/>
            <person name="Kanehisa M."/>
            <person name="Yamashita A."/>
            <person name="Oshima K."/>
            <person name="Furuya K."/>
            <person name="Yoshino C."/>
            <person name="Shiba T."/>
            <person name="Hattori M."/>
            <person name="Ogasawara N."/>
            <person name="Hayashi H."/>
            <person name="Hiramatsu K."/>
        </authorList>
    </citation>
    <scope>NUCLEOTIDE SEQUENCE [LARGE SCALE GENOMIC DNA]</scope>
    <source>
        <strain>Mu50 / ATCC 700699</strain>
    </source>
</reference>